<keyword id="KW-0025">Alternative splicing</keyword>
<keyword id="KW-0106">Calcium</keyword>
<keyword id="KW-0968">Cytoplasmic vesicle</keyword>
<keyword id="KW-0268">Exocytosis</keyword>
<keyword id="KW-0446">Lipid-binding</keyword>
<keyword id="KW-0472">Membrane</keyword>
<keyword id="KW-0479">Metal-binding</keyword>
<keyword id="KW-0653">Protein transport</keyword>
<keyword id="KW-1185">Reference proteome</keyword>
<keyword id="KW-0770">Synapse</keyword>
<keyword id="KW-0813">Transport</keyword>
<accession>Q9NHE5</accession>
<accession>H9XVQ4</accession>
<accession>H9XVQ5</accession>
<accession>Q4AB01</accession>
<accession>Q5LJP1</accession>
<accession>Q8IM88</accession>
<accession>Q8IM89</accession>
<accession>Q8MT21</accession>
<accession>Q9Y135</accession>
<evidence type="ECO:0000250" key="1"/>
<evidence type="ECO:0000255" key="2">
    <source>
        <dbReference type="PROSITE-ProRule" id="PRU00041"/>
    </source>
</evidence>
<evidence type="ECO:0000255" key="3">
    <source>
        <dbReference type="PROSITE-ProRule" id="PRU00145"/>
    </source>
</evidence>
<evidence type="ECO:0000255" key="4">
    <source>
        <dbReference type="PROSITE-ProRule" id="PRU00587"/>
    </source>
</evidence>
<evidence type="ECO:0000256" key="5">
    <source>
        <dbReference type="SAM" id="MobiDB-lite"/>
    </source>
</evidence>
<evidence type="ECO:0000269" key="6">
    <source>
    </source>
</evidence>
<evidence type="ECO:0000303" key="7">
    <source>
    </source>
</evidence>
<evidence type="ECO:0000303" key="8">
    <source>
    </source>
</evidence>
<evidence type="ECO:0000305" key="9"/>
<evidence type="ECO:0000312" key="10">
    <source>
        <dbReference type="FlyBase" id="FBgn0053653"/>
    </source>
</evidence>
<organism>
    <name type="scientific">Drosophila melanogaster</name>
    <name type="common">Fruit fly</name>
    <dbReference type="NCBI Taxonomy" id="7227"/>
    <lineage>
        <taxon>Eukaryota</taxon>
        <taxon>Metazoa</taxon>
        <taxon>Ecdysozoa</taxon>
        <taxon>Arthropoda</taxon>
        <taxon>Hexapoda</taxon>
        <taxon>Insecta</taxon>
        <taxon>Pterygota</taxon>
        <taxon>Neoptera</taxon>
        <taxon>Endopterygota</taxon>
        <taxon>Diptera</taxon>
        <taxon>Brachycera</taxon>
        <taxon>Muscomorpha</taxon>
        <taxon>Ephydroidea</taxon>
        <taxon>Drosophilidae</taxon>
        <taxon>Drosophila</taxon>
        <taxon>Sophophora</taxon>
    </lineage>
</organism>
<sequence>MIDPSSSEEEGEDDAVPNVSSKGRLTNTTKGTSAVSIIGGSAGSVVGSNIPVSGSNTDLIGNQRQSNISSICNRNDVGNISVAALGSTSNKIEQICGNRADTGNLEVPSNGIPSGISQETLNQSVGSSRANSLPRPLSPSPSLTSEKHETAEPHGKHEREEEERKRRIQLYVFISRCISYPFNAKQPTDMTKRQTKISKQQLEIITQRFQAFLKGETQIMADEAFQNAVQSYHDVFLKSERVLKMVQSGASSQHDFREVFRNNIEKRVRSLPEIDGLSKETVLTSWMAKFDIILKGTGEEDSKRPSRMQQSLNSELILSKEQLYDMFQQILLVKKFEHQILFNALMLDSADEQAAAIRRELDGRMQRVGEMEKNRKLMPKFVLKEMESLYVEELKSSINLLMANLESLPVSKGNMDSKYGLQKLKRYNHSTPSFLKLILRSHGSLSKLEGDSEDGSTQLTKLDVVLTFQLEVIVMEVENGEKLQTDQAEASKPMWDTQGDFTTTHPLPVVKVKLYTENPGMLALEDKELGKVTLKPTPLSSKSPEWHRMIVPKNLPDQDIRIKIACRLDKPLNMKHCGYLYAIGKSVWKKWKRRYFVLVQVSQYTFAMCSYKEKKSEPSEMMQLDGYTVDYIEAASANLMFGIDLNGGRYFFNAVREGDSISFACDDENECSLWVMAMYRATGQSHKPTPPITQDKNSAMSKIQGDADKARKHGMEDFISTDPCTFDHATLFKTLQNLTLEYRLNDPYASLGWFSPGQVFVLDEYCARYGVRGCYRHLCYLSDLLDRAEKQHMIDPTLIHYSFAFCASHVHGNRPDGVGSITHEEKEKFSEIKERLRQLLEFQITNFRYCFPFGRPEGALKATLSLLERVLMKDIVTPVPPEEVRQMIKKSLETAALVNYTRLSNKAKIDEDLRGDVIVPAPKKLEDLIHLAELCVDLLQQNEEHYGEAFAWFSDLLVEHAEIFWSLFAVDMDRVLSEQAPDTWDSFPLFQILNDYLRTDDNLRNGRFHQHLRDTFAPLVVRYVDLMESSIAQSIHKGFEKERWESKGINAALNPAALNNAAQALNTAALNPSMILCGKKDQVNFYVPKLPKQSNSTAANDEMRNGCATSEDLFWKLDALQSFIRDLHWPDAEFRQHLEQRLKMMAVDMIEQCIQRTDSSFQSWLKKNIAFISTDYILPSEMCAMVNVILDAKNQSFKLTTIDGIDLYKFHAKIDDQIDKANVAMTQGLSGKLMSVLESTLSKLARYDEGSLIGSILSFTNVSSSGKDLGQGYVNFFRNNMDQVRGKIADDLWTLHFFEQWYSQQINMLCNWLSERVDHALHYAQVASISHIIKKIYSDFELQGVLEDKLNSKAYQAVAQRMATEEATCALTMPDACEDEPCDEIREGEEEDNGDESTSNIPRGLPKPKVAAAQAAAVTNVVAGRVGNLLGKGIGGLSSKLGSGSWF</sequence>
<name>CAPS_DROME</name>
<proteinExistence type="evidence at protein level"/>
<dbReference type="EMBL" id="AF223578">
    <property type="protein sequence ID" value="AAF34697.1"/>
    <property type="status" value="ALT_FRAME"/>
    <property type="molecule type" value="mRNA"/>
</dbReference>
<dbReference type="EMBL" id="AE014135">
    <property type="protein sequence ID" value="AAN06590.4"/>
    <property type="molecule type" value="Genomic_DNA"/>
</dbReference>
<dbReference type="EMBL" id="AE014135">
    <property type="protein sequence ID" value="AAN06591.4"/>
    <property type="molecule type" value="Genomic_DNA"/>
</dbReference>
<dbReference type="EMBL" id="AE014135">
    <property type="protein sequence ID" value="AAZ52485.2"/>
    <property type="molecule type" value="Genomic_DNA"/>
</dbReference>
<dbReference type="EMBL" id="AE014135">
    <property type="protein sequence ID" value="AFH06799.1"/>
    <property type="molecule type" value="Genomic_DNA"/>
</dbReference>
<dbReference type="EMBL" id="AE014135">
    <property type="protein sequence ID" value="AFH06800.1"/>
    <property type="molecule type" value="Genomic_DNA"/>
</dbReference>
<dbReference type="EMBL" id="AY118427">
    <property type="protein sequence ID" value="AAM48456.1"/>
    <property type="status" value="ALT_INIT"/>
    <property type="molecule type" value="mRNA"/>
</dbReference>
<dbReference type="EMBL" id="AF145637">
    <property type="protein sequence ID" value="AAD38612.1"/>
    <property type="status" value="ALT_SEQ"/>
    <property type="molecule type" value="mRNA"/>
</dbReference>
<dbReference type="RefSeq" id="NP_001027029.2">
    <molecule id="Q9NHE5-7"/>
    <property type="nucleotide sequence ID" value="NM_001031858.2"/>
</dbReference>
<dbReference type="RefSeq" id="NP_001027030.1">
    <molecule id="Q9NHE5-4"/>
    <property type="nucleotide sequence ID" value="NM_001031859.2"/>
</dbReference>
<dbReference type="RefSeq" id="NP_001027031.1">
    <molecule id="Q9NHE5-5"/>
    <property type="nucleotide sequence ID" value="NM_001031860.2"/>
</dbReference>
<dbReference type="RefSeq" id="NP_001245439.1">
    <molecule id="Q9NHE5-2"/>
    <property type="nucleotide sequence ID" value="NM_001258510.2"/>
</dbReference>
<dbReference type="RefSeq" id="NP_001245440.1">
    <molecule id="Q9NHE5-6"/>
    <property type="nucleotide sequence ID" value="NM_001258511.2"/>
</dbReference>
<dbReference type="SMR" id="Q9NHE5"/>
<dbReference type="BioGRID" id="72491">
    <property type="interactions" value="1"/>
</dbReference>
<dbReference type="FunCoup" id="Q9NHE5">
    <property type="interactions" value="144"/>
</dbReference>
<dbReference type="STRING" id="7227.FBpp0298334"/>
<dbReference type="GlyGen" id="Q9NHE5">
    <property type="glycosylation" value="1 site, 1 O-linked glycan (1 site)"/>
</dbReference>
<dbReference type="PaxDb" id="7227-FBpp0298334"/>
<dbReference type="EnsemblMetazoa" id="FBtr0091630">
    <molecule id="Q9NHE5-5"/>
    <property type="protein sequence ID" value="FBpp0088329"/>
    <property type="gene ID" value="FBgn0053653"/>
</dbReference>
<dbReference type="EnsemblMetazoa" id="FBtr0091631">
    <molecule id="Q9NHE5-4"/>
    <property type="protein sequence ID" value="FBpp0088330"/>
    <property type="gene ID" value="FBgn0053653"/>
</dbReference>
<dbReference type="EnsemblMetazoa" id="FBtr0307333">
    <molecule id="Q9NHE5-2"/>
    <property type="protein sequence ID" value="FBpp0298334"/>
    <property type="gene ID" value="FBgn0053653"/>
</dbReference>
<dbReference type="EnsemblMetazoa" id="FBtr0307334">
    <molecule id="Q9NHE5-6"/>
    <property type="protein sequence ID" value="FBpp0298335"/>
    <property type="gene ID" value="FBgn0053653"/>
</dbReference>
<dbReference type="EnsemblMetazoa" id="FBtr0333702">
    <molecule id="Q9NHE5-7"/>
    <property type="protein sequence ID" value="FBpp0305855"/>
    <property type="gene ID" value="FBgn0053653"/>
</dbReference>
<dbReference type="GeneID" id="49968"/>
<dbReference type="KEGG" id="dme:Dmel_CG33653"/>
<dbReference type="AGR" id="FB:FBgn0053653"/>
<dbReference type="CTD" id="8618"/>
<dbReference type="FlyBase" id="FBgn0053653">
    <property type="gene designation" value="Cadps"/>
</dbReference>
<dbReference type="VEuPathDB" id="VectorBase:FBgn0053653"/>
<dbReference type="eggNOG" id="KOG3543">
    <property type="taxonomic scope" value="Eukaryota"/>
</dbReference>
<dbReference type="GeneTree" id="ENSGT00590000083094"/>
<dbReference type="InParanoid" id="Q9NHE5"/>
<dbReference type="OMA" id="FAFCATH"/>
<dbReference type="OrthoDB" id="10063282at2759"/>
<dbReference type="BioGRID-ORCS" id="49968">
    <property type="hits" value="0 hits in 3 CRISPR screens"/>
</dbReference>
<dbReference type="ChiTaRS" id="Cadps">
    <property type="organism name" value="fly"/>
</dbReference>
<dbReference type="GenomeRNAi" id="49968"/>
<dbReference type="PRO" id="PR:Q9NHE5"/>
<dbReference type="Proteomes" id="UP000000803">
    <property type="component" value="Chromosome 4"/>
</dbReference>
<dbReference type="Bgee" id="FBgn0053653">
    <property type="expression patterns" value="Expressed in transmedullary neuron Tm29 in insect head and 261 other cell types or tissues"/>
</dbReference>
<dbReference type="ExpressionAtlas" id="Q9NHE5">
    <property type="expression patterns" value="baseline and differential"/>
</dbReference>
<dbReference type="GO" id="GO:0030659">
    <property type="term" value="C:cytoplasmic vesicle membrane"/>
    <property type="evidence" value="ECO:0007669"/>
    <property type="project" value="UniProtKB-SubCell"/>
</dbReference>
<dbReference type="GO" id="GO:0045202">
    <property type="term" value="C:synapse"/>
    <property type="evidence" value="ECO:0000314"/>
    <property type="project" value="UniProtKB"/>
</dbReference>
<dbReference type="GO" id="GO:0008021">
    <property type="term" value="C:synaptic vesicle"/>
    <property type="evidence" value="ECO:0000303"/>
    <property type="project" value="FlyBase"/>
</dbReference>
<dbReference type="GO" id="GO:0005509">
    <property type="term" value="F:calcium ion binding"/>
    <property type="evidence" value="ECO:0000250"/>
    <property type="project" value="UniProtKB"/>
</dbReference>
<dbReference type="GO" id="GO:0008289">
    <property type="term" value="F:lipid binding"/>
    <property type="evidence" value="ECO:0007669"/>
    <property type="project" value="UniProtKB-KW"/>
</dbReference>
<dbReference type="GO" id="GO:1990504">
    <property type="term" value="P:dense core granule exocytosis"/>
    <property type="evidence" value="ECO:0007669"/>
    <property type="project" value="InterPro"/>
</dbReference>
<dbReference type="GO" id="GO:0006887">
    <property type="term" value="P:exocytosis"/>
    <property type="evidence" value="ECO:0000318"/>
    <property type="project" value="GO_Central"/>
</dbReference>
<dbReference type="GO" id="GO:0007269">
    <property type="term" value="P:neurotransmitter secretion"/>
    <property type="evidence" value="ECO:0000303"/>
    <property type="project" value="FlyBase"/>
</dbReference>
<dbReference type="GO" id="GO:0045956">
    <property type="term" value="P:positive regulation of calcium ion-dependent exocytosis"/>
    <property type="evidence" value="ECO:0000250"/>
    <property type="project" value="UniProtKB"/>
</dbReference>
<dbReference type="GO" id="GO:0015031">
    <property type="term" value="P:protein transport"/>
    <property type="evidence" value="ECO:0007669"/>
    <property type="project" value="UniProtKB-KW"/>
</dbReference>
<dbReference type="GO" id="GO:0035249">
    <property type="term" value="P:synaptic transmission, glutamatergic"/>
    <property type="evidence" value="ECO:0000315"/>
    <property type="project" value="UniProtKB"/>
</dbReference>
<dbReference type="GO" id="GO:0016079">
    <property type="term" value="P:synaptic vesicle exocytosis"/>
    <property type="evidence" value="ECO:0000315"/>
    <property type="project" value="UniProtKB"/>
</dbReference>
<dbReference type="GO" id="GO:0016192">
    <property type="term" value="P:vesicle-mediated transport"/>
    <property type="evidence" value="ECO:0000303"/>
    <property type="project" value="FlyBase"/>
</dbReference>
<dbReference type="CDD" id="cd01234">
    <property type="entry name" value="PH_CADPS"/>
    <property type="match status" value="1"/>
</dbReference>
<dbReference type="FunFam" id="2.30.29.30:FF:000007">
    <property type="entry name" value="Calcium-dependent secretion activator 2 isoform B"/>
    <property type="match status" value="1"/>
</dbReference>
<dbReference type="Gene3D" id="2.30.29.30">
    <property type="entry name" value="Pleckstrin-homology domain (PH domain)/Phosphotyrosine-binding domain (PTB)"/>
    <property type="match status" value="1"/>
</dbReference>
<dbReference type="InterPro" id="IPR000008">
    <property type="entry name" value="C2_dom"/>
</dbReference>
<dbReference type="InterPro" id="IPR033227">
    <property type="entry name" value="CAPS"/>
</dbReference>
<dbReference type="InterPro" id="IPR010439">
    <property type="entry name" value="MUN_dom"/>
</dbReference>
<dbReference type="InterPro" id="IPR014770">
    <property type="entry name" value="Munc13_1"/>
</dbReference>
<dbReference type="InterPro" id="IPR011993">
    <property type="entry name" value="PH-like_dom_sf"/>
</dbReference>
<dbReference type="InterPro" id="IPR001849">
    <property type="entry name" value="PH_domain"/>
</dbReference>
<dbReference type="PANTHER" id="PTHR12166">
    <property type="entry name" value="CALCIUM-DEPENDENT SECRETION ACTIVATOR"/>
    <property type="match status" value="1"/>
</dbReference>
<dbReference type="PANTHER" id="PTHR12166:SF8">
    <property type="entry name" value="CALCIUM-DEPENDENT SECRETION ACTIVATOR"/>
    <property type="match status" value="1"/>
</dbReference>
<dbReference type="Pfam" id="PF25341">
    <property type="entry name" value="C2_CAPS"/>
    <property type="match status" value="1"/>
</dbReference>
<dbReference type="Pfam" id="PF06292">
    <property type="entry name" value="MUN"/>
    <property type="match status" value="1"/>
</dbReference>
<dbReference type="Pfam" id="PF00169">
    <property type="entry name" value="PH"/>
    <property type="match status" value="1"/>
</dbReference>
<dbReference type="SMART" id="SM01145">
    <property type="entry name" value="DUF1041"/>
    <property type="match status" value="1"/>
</dbReference>
<dbReference type="SMART" id="SM00233">
    <property type="entry name" value="PH"/>
    <property type="match status" value="1"/>
</dbReference>
<dbReference type="SUPFAM" id="SSF50729">
    <property type="entry name" value="PH domain-like"/>
    <property type="match status" value="1"/>
</dbReference>
<dbReference type="PROSITE" id="PS50004">
    <property type="entry name" value="C2"/>
    <property type="match status" value="1"/>
</dbReference>
<dbReference type="PROSITE" id="PS51258">
    <property type="entry name" value="MHD1"/>
    <property type="match status" value="1"/>
</dbReference>
<dbReference type="PROSITE" id="PS50003">
    <property type="entry name" value="PH_DOMAIN"/>
    <property type="match status" value="1"/>
</dbReference>
<feature type="chain" id="PRO_0000053872" description="Calcium-dependent secretion activator">
    <location>
        <begin position="1"/>
        <end position="1447"/>
    </location>
</feature>
<feature type="domain" description="C2" evidence="2">
    <location>
        <begin position="417"/>
        <end position="547"/>
    </location>
</feature>
<feature type="domain" description="PH" evidence="3">
    <location>
        <begin position="573"/>
        <end position="683"/>
    </location>
</feature>
<feature type="domain" description="MHD1" evidence="4">
    <location>
        <begin position="970"/>
        <end position="1157"/>
    </location>
</feature>
<feature type="region of interest" description="Disordered" evidence="5">
    <location>
        <begin position="1"/>
        <end position="35"/>
    </location>
</feature>
<feature type="region of interest" description="Disordered" evidence="5">
    <location>
        <begin position="101"/>
        <end position="163"/>
    </location>
</feature>
<feature type="region of interest" description="Disordered" evidence="5">
    <location>
        <begin position="1386"/>
        <end position="1406"/>
    </location>
</feature>
<feature type="compositionally biased region" description="Acidic residues" evidence="5">
    <location>
        <begin position="1"/>
        <end position="15"/>
    </location>
</feature>
<feature type="compositionally biased region" description="Polar residues" evidence="5">
    <location>
        <begin position="18"/>
        <end position="32"/>
    </location>
</feature>
<feature type="compositionally biased region" description="Polar residues" evidence="5">
    <location>
        <begin position="111"/>
        <end position="126"/>
    </location>
</feature>
<feature type="compositionally biased region" description="Low complexity" evidence="5">
    <location>
        <begin position="127"/>
        <end position="144"/>
    </location>
</feature>
<feature type="compositionally biased region" description="Basic and acidic residues" evidence="5">
    <location>
        <begin position="145"/>
        <end position="163"/>
    </location>
</feature>
<feature type="compositionally biased region" description="Acidic residues" evidence="5">
    <location>
        <begin position="1386"/>
        <end position="1395"/>
    </location>
</feature>
<feature type="splice variant" id="VSP_047912" description="In isoform 3." evidence="8">
    <location>
        <begin position="1"/>
        <end position="463"/>
    </location>
</feature>
<feature type="splice variant" id="VSP_047913" description="In isoform 5." evidence="9">
    <original>STPSFL</original>
    <variation>R</variation>
    <location>
        <begin position="430"/>
        <end position="435"/>
    </location>
</feature>
<feature type="splice variant" id="VSP_047914" description="In isoform 4." evidence="9">
    <location>
        <begin position="477"/>
        <end position="478"/>
    </location>
</feature>
<feature type="splice variant" id="VSP_047915" description="In isoform 2, isoform 3, isoform 5, isoform 6 and isoform 7." evidence="7 8">
    <original>V</original>
    <variation>VKGLKSLAPNRIVYCTMEV</variation>
    <location>
        <position position="477"/>
    </location>
</feature>
<feature type="splice variant" id="VSP_047916" description="In isoform 6." evidence="9">
    <location>
        <position position="705"/>
    </location>
</feature>
<feature type="splice variant" id="VSP_047917" description="In isoform 2, isoform 3, isoform 5 and isoform 6." evidence="7 8">
    <original>E</original>
    <variation>ELRKHDKMDKKKLLKEDEDVSGGHNESEVDLIDSTGLISASELATAASTDGSSFRYCMPTHAVYTPPVPT</variation>
    <location>
        <position position="948"/>
    </location>
</feature>
<feature type="splice variant" id="VSP_047918" description="In isoform 3." evidence="8">
    <original>DNLRNGRFHQHLRDTFAPLVVRYVDLMESSIAQSIHKGFEKERWESKGINAAL</original>
    <variation>APTQAPLSATTTGAIPTARSTSGWVRVHQGTAPLTPSKTNPEVLFSKPTRIAP</variation>
    <location>
        <begin position="1001"/>
        <end position="1053"/>
    </location>
</feature>
<feature type="splice variant" id="VSP_047919" description="In isoform 6 and isoform 7." evidence="9">
    <location>
        <begin position="1049"/>
        <end position="1104"/>
    </location>
</feature>
<feature type="splice variant" id="VSP_047920" description="In isoform 3." evidence="8">
    <location>
        <begin position="1054"/>
        <end position="1447"/>
    </location>
</feature>
<feature type="sequence conflict" description="In Ref. 1; AAF34697." evidence="9" ref="1">
    <original>S</original>
    <variation>N</variation>
    <location>
        <position position="33"/>
    </location>
</feature>
<feature type="sequence conflict" description="In Ref. 1; AAF34697." evidence="9" ref="1">
    <original>P</original>
    <variation>Q</variation>
    <location>
        <position position="153"/>
    </location>
</feature>
<feature type="sequence conflict" description="In Ref. 1; AAF34697." evidence="9" ref="1">
    <original>R</original>
    <variation>S</variation>
    <location>
        <position position="164"/>
    </location>
</feature>
<feature type="sequence conflict" description="In Ref. 1; AAF34697." evidence="9" ref="1">
    <original>IQLY</original>
    <variation>NSTL</variation>
    <location>
        <begin position="168"/>
        <end position="171"/>
    </location>
</feature>
<feature type="sequence conflict" description="In Ref. 1; AAF34697." evidence="9" ref="1">
    <original>T</original>
    <variation>K</variation>
    <location>
        <position position="195"/>
    </location>
</feature>
<feature type="sequence conflict" description="In Ref. 1; AAF34697." evidence="9" ref="1">
    <original>I</original>
    <variation>N</variation>
    <location>
        <position position="204"/>
    </location>
</feature>
<feature type="sequence conflict" description="In Ref. 1; AAF34697." evidence="9" ref="1">
    <original>M</original>
    <variation>V</variation>
    <location>
        <position position="1234"/>
    </location>
</feature>
<feature type="sequence conflict" description="In Ref. 1; AAF34697." evidence="9" ref="1">
    <original>AYQAV</original>
    <variation>DIRQ</variation>
    <location>
        <begin position="1354"/>
        <end position="1358"/>
    </location>
</feature>
<gene>
    <name evidence="10" type="primary">Cadps</name>
    <name evidence="10" type="synonym">Caps</name>
    <name evidence="10" type="ORF">CG33653</name>
</gene>
<comment type="function">
    <text evidence="6">Calcium-binding protein involved in exocytosis of vesicles filled with neurotransmitters and neuropeptides. May specifically mediate the Ca(2+)-dependent exocytosis of large dense-core vesicles (DCVs) and other dense-core vesicles. However, it probably also participates in small clear synaptic vesicles (SVs) exocytosis and it is unclear whether its function is related to Ca(2+) triggering.</text>
</comment>
<comment type="subcellular location">
    <subcellularLocation>
        <location evidence="6">Cytoplasmic vesicle membrane</location>
    </subcellularLocation>
    <subcellularLocation>
        <location evidence="6">Synapse</location>
    </subcellularLocation>
    <text evidence="6">Membrane-associated to vesicles. Restricted to all classes of presynaptic termini independent of the ratio of vesicular content (dense core vesicles versus synaptic vesicles). Found in all identified classes of peripheral and central synapses. In the CNS, it is highly enriched in the synapse-dense neuropil, which lacks cell bodies. Present in all synapses in the neuropil where it precisely colocalizes with other pansynaptic markers. Similarly abundant in all classes of neuromuscular junction (NMJ) termini, including type I, II, and III NMJs, where it localizes to all 3 bouton types. Expressed at similar levels in boutons which contain primarily small clear glutamatergic vesicles, as well as boutons very highly enriched in large DCVs. It appears that neither bouton class contains a pure population of either SVs or DCVs, but only differs dramatically in the relative abundance of the vesicular classes. Thus, the level of expression does not correlate with the abundance of DCVs. Clearly present presynaptically and colocalizes exclusively with presynaptic markers.</text>
</comment>
<comment type="alternative products">
    <event type="alternative splicing"/>
    <isoform>
        <id>Q9NHE5-1</id>
        <name>1</name>
        <sequence type="displayed"/>
    </isoform>
    <isoform>
        <id>Q9NHE5-2</id>
        <name>2</name>
        <name>D</name>
        <sequence type="described" ref="VSP_047915 VSP_047917"/>
    </isoform>
    <isoform>
        <id>Q9NHE5-3</id>
        <name>3</name>
        <name>C</name>
        <sequence type="described" ref="VSP_047912 VSP_047915 VSP_047917 VSP_047918 VSP_047920"/>
    </isoform>
    <isoform>
        <id>Q9NHE5-4</id>
        <name>4</name>
        <name>B</name>
        <sequence type="described" ref="VSP_047914"/>
    </isoform>
    <isoform>
        <id>Q9NHE5-5</id>
        <name>5</name>
        <name>A</name>
        <sequence type="described" ref="VSP_047913 VSP_047915 VSP_047917"/>
    </isoform>
    <isoform>
        <id>Q9NHE5-6</id>
        <name>6</name>
        <name>E</name>
        <sequence type="described" ref="VSP_047915 VSP_047916 VSP_047917 VSP_047919"/>
    </isoform>
    <isoform>
        <id>Q9NHE5-7</id>
        <name>7</name>
        <name>F</name>
        <sequence type="described" ref="VSP_047915 VSP_047919"/>
    </isoform>
</comment>
<comment type="tissue specificity">
    <text evidence="6">Restricted to the nervous system at all stages of development and highly localized at synapses (at protein level).</text>
</comment>
<comment type="developmental stage">
    <text evidence="6">Not detected in early embryos through stage 8. Strongly expressed in neural-specific cells at the onset of early stages of neuronal differentiation beginning at stage 9-10. Accumulates from stage 12 through the rest of embryogenesis in all neuronal cells within the brain and ventral nerve cord (VNC). Remains restricted to the central nervous system and not detected in other tissues at any stage of development.</text>
</comment>
<comment type="domain">
    <text evidence="1">The PH domain is essential for regulated exocytosis and binds phospholipids.</text>
</comment>
<comment type="disruption phenotype">
    <text evidence="6">Flies display locomotory deficits and complete embryonic lethality. The mutant NMJ reveals a 50% loss in evoked glutamatergic transmission, and an accumulation of synaptic vesicles at active zones. They also display a 3-fold accumulation of DCVs in synaptic terminals.</text>
</comment>
<comment type="miscellaneous">
    <molecule>Isoform 3</molecule>
    <text evidence="9">Incomplete sequence.</text>
</comment>
<comment type="sequence caution" evidence="9">
    <conflict type="miscellaneous discrepancy">
        <sequence resource="EMBL-CDS" id="AAD38612"/>
    </conflict>
</comment>
<comment type="sequence caution" evidence="9">
    <conflict type="frameshift">
        <sequence resource="EMBL-CDS" id="AAF34697"/>
    </conflict>
</comment>
<comment type="sequence caution" evidence="9">
    <conflict type="erroneous initiation">
        <sequence resource="EMBL-CDS" id="AAM48456"/>
    </conflict>
    <text>Truncated N-terminus.</text>
</comment>
<reference key="1">
    <citation type="journal article" date="2001" name="Neuron">
        <title>Drosophila CAPS is an essential gene that regulates dense-core vesicle release and synaptic vesicle fusion.</title>
        <authorList>
            <person name="Renden R."/>
            <person name="Berwin B."/>
            <person name="Davis W."/>
            <person name="Ann K."/>
            <person name="Chin C.-T."/>
            <person name="Kreber R."/>
            <person name="Ganetzky B."/>
            <person name="Martin T.F.J."/>
            <person name="Broadie K."/>
        </authorList>
    </citation>
    <scope>NUCLEOTIDE SEQUENCE [MRNA] (ISOFORM 1)</scope>
    <scope>FUNCTION</scope>
    <scope>SUBCELLULAR LOCATION</scope>
    <scope>TISSUE SPECIFICITY</scope>
    <scope>DEVELOPMENTAL STAGE</scope>
    <scope>DISRUPTION PHENOTYPE</scope>
</reference>
<reference key="2">
    <citation type="journal article" date="2000" name="Science">
        <title>The genome sequence of Drosophila melanogaster.</title>
        <authorList>
            <person name="Adams M.D."/>
            <person name="Celniker S.E."/>
            <person name="Holt R.A."/>
            <person name="Evans C.A."/>
            <person name="Gocayne J.D."/>
            <person name="Amanatides P.G."/>
            <person name="Scherer S.E."/>
            <person name="Li P.W."/>
            <person name="Hoskins R.A."/>
            <person name="Galle R.F."/>
            <person name="George R.A."/>
            <person name="Lewis S.E."/>
            <person name="Richards S."/>
            <person name="Ashburner M."/>
            <person name="Henderson S.N."/>
            <person name="Sutton G.G."/>
            <person name="Wortman J.R."/>
            <person name="Yandell M.D."/>
            <person name="Zhang Q."/>
            <person name="Chen L.X."/>
            <person name="Brandon R.C."/>
            <person name="Rogers Y.-H.C."/>
            <person name="Blazej R.G."/>
            <person name="Champe M."/>
            <person name="Pfeiffer B.D."/>
            <person name="Wan K.H."/>
            <person name="Doyle C."/>
            <person name="Baxter E.G."/>
            <person name="Helt G."/>
            <person name="Nelson C.R."/>
            <person name="Miklos G.L.G."/>
            <person name="Abril J.F."/>
            <person name="Agbayani A."/>
            <person name="An H.-J."/>
            <person name="Andrews-Pfannkoch C."/>
            <person name="Baldwin D."/>
            <person name="Ballew R.M."/>
            <person name="Basu A."/>
            <person name="Baxendale J."/>
            <person name="Bayraktaroglu L."/>
            <person name="Beasley E.M."/>
            <person name="Beeson K.Y."/>
            <person name="Benos P.V."/>
            <person name="Berman B.P."/>
            <person name="Bhandari D."/>
            <person name="Bolshakov S."/>
            <person name="Borkova D."/>
            <person name="Botchan M.R."/>
            <person name="Bouck J."/>
            <person name="Brokstein P."/>
            <person name="Brottier P."/>
            <person name="Burtis K.C."/>
            <person name="Busam D.A."/>
            <person name="Butler H."/>
            <person name="Cadieu E."/>
            <person name="Center A."/>
            <person name="Chandra I."/>
            <person name="Cherry J.M."/>
            <person name="Cawley S."/>
            <person name="Dahlke C."/>
            <person name="Davenport L.B."/>
            <person name="Davies P."/>
            <person name="de Pablos B."/>
            <person name="Delcher A."/>
            <person name="Deng Z."/>
            <person name="Mays A.D."/>
            <person name="Dew I."/>
            <person name="Dietz S.M."/>
            <person name="Dodson K."/>
            <person name="Doup L.E."/>
            <person name="Downes M."/>
            <person name="Dugan-Rocha S."/>
            <person name="Dunkov B.C."/>
            <person name="Dunn P."/>
            <person name="Durbin K.J."/>
            <person name="Evangelista C.C."/>
            <person name="Ferraz C."/>
            <person name="Ferriera S."/>
            <person name="Fleischmann W."/>
            <person name="Fosler C."/>
            <person name="Gabrielian A.E."/>
            <person name="Garg N.S."/>
            <person name="Gelbart W.M."/>
            <person name="Glasser K."/>
            <person name="Glodek A."/>
            <person name="Gong F."/>
            <person name="Gorrell J.H."/>
            <person name="Gu Z."/>
            <person name="Guan P."/>
            <person name="Harris M."/>
            <person name="Harris N.L."/>
            <person name="Harvey D.A."/>
            <person name="Heiman T.J."/>
            <person name="Hernandez J.R."/>
            <person name="Houck J."/>
            <person name="Hostin D."/>
            <person name="Houston K.A."/>
            <person name="Howland T.J."/>
            <person name="Wei M.-H."/>
            <person name="Ibegwam C."/>
            <person name="Jalali M."/>
            <person name="Kalush F."/>
            <person name="Karpen G.H."/>
            <person name="Ke Z."/>
            <person name="Kennison J.A."/>
            <person name="Ketchum K.A."/>
            <person name="Kimmel B.E."/>
            <person name="Kodira C.D."/>
            <person name="Kraft C.L."/>
            <person name="Kravitz S."/>
            <person name="Kulp D."/>
            <person name="Lai Z."/>
            <person name="Lasko P."/>
            <person name="Lei Y."/>
            <person name="Levitsky A.A."/>
            <person name="Li J.H."/>
            <person name="Li Z."/>
            <person name="Liang Y."/>
            <person name="Lin X."/>
            <person name="Liu X."/>
            <person name="Mattei B."/>
            <person name="McIntosh T.C."/>
            <person name="McLeod M.P."/>
            <person name="McPherson D."/>
            <person name="Merkulov G."/>
            <person name="Milshina N.V."/>
            <person name="Mobarry C."/>
            <person name="Morris J."/>
            <person name="Moshrefi A."/>
            <person name="Mount S.M."/>
            <person name="Moy M."/>
            <person name="Murphy B."/>
            <person name="Murphy L."/>
            <person name="Muzny D.M."/>
            <person name="Nelson D.L."/>
            <person name="Nelson D.R."/>
            <person name="Nelson K.A."/>
            <person name="Nixon K."/>
            <person name="Nusskern D.R."/>
            <person name="Pacleb J.M."/>
            <person name="Palazzolo M."/>
            <person name="Pittman G.S."/>
            <person name="Pan S."/>
            <person name="Pollard J."/>
            <person name="Puri V."/>
            <person name="Reese M.G."/>
            <person name="Reinert K."/>
            <person name="Remington K."/>
            <person name="Saunders R.D.C."/>
            <person name="Scheeler F."/>
            <person name="Shen H."/>
            <person name="Shue B.C."/>
            <person name="Siden-Kiamos I."/>
            <person name="Simpson M."/>
            <person name="Skupski M.P."/>
            <person name="Smith T.J."/>
            <person name="Spier E."/>
            <person name="Spradling A.C."/>
            <person name="Stapleton M."/>
            <person name="Strong R."/>
            <person name="Sun E."/>
            <person name="Svirskas R."/>
            <person name="Tector C."/>
            <person name="Turner R."/>
            <person name="Venter E."/>
            <person name="Wang A.H."/>
            <person name="Wang X."/>
            <person name="Wang Z.-Y."/>
            <person name="Wassarman D.A."/>
            <person name="Weinstock G.M."/>
            <person name="Weissenbach J."/>
            <person name="Williams S.M."/>
            <person name="Woodage T."/>
            <person name="Worley K.C."/>
            <person name="Wu D."/>
            <person name="Yang S."/>
            <person name="Yao Q.A."/>
            <person name="Ye J."/>
            <person name="Yeh R.-F."/>
            <person name="Zaveri J.S."/>
            <person name="Zhan M."/>
            <person name="Zhang G."/>
            <person name="Zhao Q."/>
            <person name="Zheng L."/>
            <person name="Zheng X.H."/>
            <person name="Zhong F.N."/>
            <person name="Zhong W."/>
            <person name="Zhou X."/>
            <person name="Zhu S.C."/>
            <person name="Zhu X."/>
            <person name="Smith H.O."/>
            <person name="Gibbs R.A."/>
            <person name="Myers E.W."/>
            <person name="Rubin G.M."/>
            <person name="Venter J.C."/>
        </authorList>
    </citation>
    <scope>NUCLEOTIDE SEQUENCE [LARGE SCALE GENOMIC DNA]</scope>
    <source>
        <strain>Berkeley</strain>
    </source>
</reference>
<reference key="3">
    <citation type="journal article" date="2002" name="Genome Biol.">
        <title>Annotation of the Drosophila melanogaster euchromatic genome: a systematic review.</title>
        <authorList>
            <person name="Misra S."/>
            <person name="Crosby M.A."/>
            <person name="Mungall C.J."/>
            <person name="Matthews B.B."/>
            <person name="Campbell K.S."/>
            <person name="Hradecky P."/>
            <person name="Huang Y."/>
            <person name="Kaminker J.S."/>
            <person name="Millburn G.H."/>
            <person name="Prochnik S.E."/>
            <person name="Smith C.D."/>
            <person name="Tupy J.L."/>
            <person name="Whitfield E.J."/>
            <person name="Bayraktaroglu L."/>
            <person name="Berman B.P."/>
            <person name="Bettencourt B.R."/>
            <person name="Celniker S.E."/>
            <person name="de Grey A.D.N.J."/>
            <person name="Drysdale R.A."/>
            <person name="Harris N.L."/>
            <person name="Richter J."/>
            <person name="Russo S."/>
            <person name="Schroeder A.J."/>
            <person name="Shu S.Q."/>
            <person name="Stapleton M."/>
            <person name="Yamada C."/>
            <person name="Ashburner M."/>
            <person name="Gelbart W.M."/>
            <person name="Rubin G.M."/>
            <person name="Lewis S.E."/>
        </authorList>
    </citation>
    <scope>GENOME REANNOTATION</scope>
    <scope>ALTERNATIVE SPLICING</scope>
    <source>
        <strain>Berkeley</strain>
    </source>
</reference>
<reference key="4">
    <citation type="journal article" date="2002" name="Genome Biol.">
        <title>A Drosophila full-length cDNA resource.</title>
        <authorList>
            <person name="Stapleton M."/>
            <person name="Carlson J.W."/>
            <person name="Brokstein P."/>
            <person name="Yu C."/>
            <person name="Champe M."/>
            <person name="George R.A."/>
            <person name="Guarin H."/>
            <person name="Kronmiller B."/>
            <person name="Pacleb J.M."/>
            <person name="Park S."/>
            <person name="Wan K.H."/>
            <person name="Rubin G.M."/>
            <person name="Celniker S.E."/>
        </authorList>
    </citation>
    <scope>NUCLEOTIDE SEQUENCE [LARGE SCALE MRNA] OF 464-1447 (ISOFORM 3)</scope>
    <source>
        <strain>Berkeley</strain>
        <tissue>Head</tissue>
    </source>
</reference>
<reference key="5">
    <citation type="journal article" date="2000" name="Science">
        <title>A Drosophila complementary DNA resource.</title>
        <authorList>
            <person name="Rubin G.M."/>
            <person name="Hong L."/>
            <person name="Brokstein P."/>
            <person name="Evans-Holm M."/>
            <person name="Frise E."/>
            <person name="Stapleton M."/>
            <person name="Harvey D.A."/>
        </authorList>
    </citation>
    <scope>NUCLEOTIDE SEQUENCE [LARGE SCALE MRNA] OF 714-1447 (ISOFORM 2)</scope>
    <source>
        <strain>Berkeley</strain>
        <tissue>Head</tissue>
    </source>
</reference>
<protein>
    <recommendedName>
        <fullName>Calcium-dependent secretion activator</fullName>
    </recommendedName>
    <alternativeName>
        <fullName>Calcium-activated protein for secretion</fullName>
    </alternativeName>
</protein>